<reference key="1">
    <citation type="submission" date="2006-08" db="EMBL/GenBank/DDBJ databases">
        <title>Complete sequence of chromosome 2 of Burkholderia cepacia AMMD.</title>
        <authorList>
            <person name="Copeland A."/>
            <person name="Lucas S."/>
            <person name="Lapidus A."/>
            <person name="Barry K."/>
            <person name="Detter J.C."/>
            <person name="Glavina del Rio T."/>
            <person name="Hammon N."/>
            <person name="Israni S."/>
            <person name="Pitluck S."/>
            <person name="Bruce D."/>
            <person name="Chain P."/>
            <person name="Malfatti S."/>
            <person name="Shin M."/>
            <person name="Vergez L."/>
            <person name="Schmutz J."/>
            <person name="Larimer F."/>
            <person name="Land M."/>
            <person name="Hauser L."/>
            <person name="Kyrpides N."/>
            <person name="Kim E."/>
            <person name="Parke J."/>
            <person name="Coenye T."/>
            <person name="Konstantinidis K."/>
            <person name="Ramette A."/>
            <person name="Tiedje J."/>
            <person name="Richardson P."/>
        </authorList>
    </citation>
    <scope>NUCLEOTIDE SEQUENCE [LARGE SCALE GENOMIC DNA]</scope>
    <source>
        <strain>ATCC BAA-244 / DSM 16087 / CCUG 44356 / LMG 19182 / AMMD</strain>
    </source>
</reference>
<feature type="chain" id="PRO_1000046560" description="Oxygen-dependent choline dehydrogenase">
    <location>
        <begin position="1"/>
        <end position="566"/>
    </location>
</feature>
<feature type="region of interest" description="Disordered" evidence="2">
    <location>
        <begin position="183"/>
        <end position="203"/>
    </location>
</feature>
<feature type="active site" description="Proton acceptor" evidence="1">
    <location>
        <position position="474"/>
    </location>
</feature>
<feature type="binding site" evidence="1">
    <location>
        <begin position="7"/>
        <end position="36"/>
    </location>
    <ligand>
        <name>FAD</name>
        <dbReference type="ChEBI" id="CHEBI:57692"/>
    </ligand>
</feature>
<dbReference type="EC" id="1.1.99.1" evidence="1"/>
<dbReference type="EC" id="1.2.1.8" evidence="1"/>
<dbReference type="EMBL" id="CP000441">
    <property type="protein sequence ID" value="ABI90062.1"/>
    <property type="molecule type" value="Genomic_DNA"/>
</dbReference>
<dbReference type="RefSeq" id="WP_011659483.1">
    <property type="nucleotide sequence ID" value="NC_008391.1"/>
</dbReference>
<dbReference type="SMR" id="Q0B711"/>
<dbReference type="GeneID" id="93087472"/>
<dbReference type="KEGG" id="bam:Bamb_4512"/>
<dbReference type="PATRIC" id="fig|339670.21.peg.4846"/>
<dbReference type="eggNOG" id="COG2303">
    <property type="taxonomic scope" value="Bacteria"/>
</dbReference>
<dbReference type="UniPathway" id="UPA00529">
    <property type="reaction ID" value="UER00385"/>
</dbReference>
<dbReference type="Proteomes" id="UP000000662">
    <property type="component" value="Chromosome 2"/>
</dbReference>
<dbReference type="GO" id="GO:0016020">
    <property type="term" value="C:membrane"/>
    <property type="evidence" value="ECO:0007669"/>
    <property type="project" value="TreeGrafter"/>
</dbReference>
<dbReference type="GO" id="GO:0008802">
    <property type="term" value="F:betaine-aldehyde dehydrogenase (NAD+) activity"/>
    <property type="evidence" value="ECO:0007669"/>
    <property type="project" value="UniProtKB-EC"/>
</dbReference>
<dbReference type="GO" id="GO:0008812">
    <property type="term" value="F:choline dehydrogenase activity"/>
    <property type="evidence" value="ECO:0007669"/>
    <property type="project" value="UniProtKB-UniRule"/>
</dbReference>
<dbReference type="GO" id="GO:0050660">
    <property type="term" value="F:flavin adenine dinucleotide binding"/>
    <property type="evidence" value="ECO:0007669"/>
    <property type="project" value="InterPro"/>
</dbReference>
<dbReference type="GO" id="GO:0019285">
    <property type="term" value="P:glycine betaine biosynthetic process from choline"/>
    <property type="evidence" value="ECO:0007669"/>
    <property type="project" value="UniProtKB-UniRule"/>
</dbReference>
<dbReference type="Gene3D" id="3.50.50.60">
    <property type="entry name" value="FAD/NAD(P)-binding domain"/>
    <property type="match status" value="1"/>
</dbReference>
<dbReference type="Gene3D" id="3.30.560.10">
    <property type="entry name" value="Glucose Oxidase, domain 3"/>
    <property type="match status" value="1"/>
</dbReference>
<dbReference type="HAMAP" id="MF_00750">
    <property type="entry name" value="Choline_dehydrogen"/>
    <property type="match status" value="1"/>
</dbReference>
<dbReference type="InterPro" id="IPR011533">
    <property type="entry name" value="BetA"/>
</dbReference>
<dbReference type="InterPro" id="IPR036188">
    <property type="entry name" value="FAD/NAD-bd_sf"/>
</dbReference>
<dbReference type="InterPro" id="IPR012132">
    <property type="entry name" value="GMC_OxRdtase"/>
</dbReference>
<dbReference type="InterPro" id="IPR000172">
    <property type="entry name" value="GMC_OxRdtase_N"/>
</dbReference>
<dbReference type="InterPro" id="IPR007867">
    <property type="entry name" value="GMC_OxRtase_C"/>
</dbReference>
<dbReference type="NCBIfam" id="TIGR01810">
    <property type="entry name" value="betA"/>
    <property type="match status" value="1"/>
</dbReference>
<dbReference type="NCBIfam" id="NF002550">
    <property type="entry name" value="PRK02106.1"/>
    <property type="match status" value="1"/>
</dbReference>
<dbReference type="PANTHER" id="PTHR11552:SF147">
    <property type="entry name" value="CHOLINE DEHYDROGENASE, MITOCHONDRIAL"/>
    <property type="match status" value="1"/>
</dbReference>
<dbReference type="PANTHER" id="PTHR11552">
    <property type="entry name" value="GLUCOSE-METHANOL-CHOLINE GMC OXIDOREDUCTASE"/>
    <property type="match status" value="1"/>
</dbReference>
<dbReference type="Pfam" id="PF05199">
    <property type="entry name" value="GMC_oxred_C"/>
    <property type="match status" value="1"/>
</dbReference>
<dbReference type="Pfam" id="PF00732">
    <property type="entry name" value="GMC_oxred_N"/>
    <property type="match status" value="1"/>
</dbReference>
<dbReference type="PIRSF" id="PIRSF000137">
    <property type="entry name" value="Alcohol_oxidase"/>
    <property type="match status" value="1"/>
</dbReference>
<dbReference type="SUPFAM" id="SSF54373">
    <property type="entry name" value="FAD-linked reductases, C-terminal domain"/>
    <property type="match status" value="1"/>
</dbReference>
<dbReference type="SUPFAM" id="SSF51905">
    <property type="entry name" value="FAD/NAD(P)-binding domain"/>
    <property type="match status" value="1"/>
</dbReference>
<dbReference type="PROSITE" id="PS00623">
    <property type="entry name" value="GMC_OXRED_1"/>
    <property type="match status" value="1"/>
</dbReference>
<dbReference type="PROSITE" id="PS00624">
    <property type="entry name" value="GMC_OXRED_2"/>
    <property type="match status" value="1"/>
</dbReference>
<organism>
    <name type="scientific">Burkholderia ambifaria (strain ATCC BAA-244 / DSM 16087 / CCUG 44356 / LMG 19182 / AMMD)</name>
    <name type="common">Burkholderia cepacia (strain AMMD)</name>
    <dbReference type="NCBI Taxonomy" id="339670"/>
    <lineage>
        <taxon>Bacteria</taxon>
        <taxon>Pseudomonadati</taxon>
        <taxon>Pseudomonadota</taxon>
        <taxon>Betaproteobacteria</taxon>
        <taxon>Burkholderiales</taxon>
        <taxon>Burkholderiaceae</taxon>
        <taxon>Burkholderia</taxon>
        <taxon>Burkholderia cepacia complex</taxon>
    </lineage>
</organism>
<accession>Q0B711</accession>
<comment type="function">
    <text evidence="1">Involved in the biosynthesis of the osmoprotectant glycine betaine. Catalyzes the oxidation of choline to betaine aldehyde and betaine aldehyde to glycine betaine at the same rate.</text>
</comment>
<comment type="catalytic activity">
    <reaction evidence="1">
        <text>choline + A = betaine aldehyde + AH2</text>
        <dbReference type="Rhea" id="RHEA:17433"/>
        <dbReference type="ChEBI" id="CHEBI:13193"/>
        <dbReference type="ChEBI" id="CHEBI:15354"/>
        <dbReference type="ChEBI" id="CHEBI:15710"/>
        <dbReference type="ChEBI" id="CHEBI:17499"/>
        <dbReference type="EC" id="1.1.99.1"/>
    </reaction>
</comment>
<comment type="catalytic activity">
    <reaction evidence="1">
        <text>betaine aldehyde + NAD(+) + H2O = glycine betaine + NADH + 2 H(+)</text>
        <dbReference type="Rhea" id="RHEA:15305"/>
        <dbReference type="ChEBI" id="CHEBI:15377"/>
        <dbReference type="ChEBI" id="CHEBI:15378"/>
        <dbReference type="ChEBI" id="CHEBI:15710"/>
        <dbReference type="ChEBI" id="CHEBI:17750"/>
        <dbReference type="ChEBI" id="CHEBI:57540"/>
        <dbReference type="ChEBI" id="CHEBI:57945"/>
        <dbReference type="EC" id="1.2.1.8"/>
    </reaction>
</comment>
<comment type="cofactor">
    <cofactor evidence="1">
        <name>FAD</name>
        <dbReference type="ChEBI" id="CHEBI:57692"/>
    </cofactor>
</comment>
<comment type="pathway">
    <text evidence="1">Amine and polyamine biosynthesis; betaine biosynthesis via choline pathway; betaine aldehyde from choline (cytochrome c reductase route): step 1/1.</text>
</comment>
<comment type="similarity">
    <text evidence="1">Belongs to the GMC oxidoreductase family.</text>
</comment>
<keyword id="KW-0274">FAD</keyword>
<keyword id="KW-0285">Flavoprotein</keyword>
<keyword id="KW-0520">NAD</keyword>
<keyword id="KW-0560">Oxidoreductase</keyword>
<name>BETA_BURCM</name>
<evidence type="ECO:0000255" key="1">
    <source>
        <dbReference type="HAMAP-Rule" id="MF_00750"/>
    </source>
</evidence>
<evidence type="ECO:0000256" key="2">
    <source>
        <dbReference type="SAM" id="MobiDB-lite"/>
    </source>
</evidence>
<gene>
    <name evidence="1" type="primary">betA</name>
    <name type="ordered locus">Bamb_4512</name>
</gene>
<protein>
    <recommendedName>
        <fullName evidence="1">Oxygen-dependent choline dehydrogenase</fullName>
        <shortName evidence="1">CDH</shortName>
        <shortName evidence="1">CHD</shortName>
        <ecNumber evidence="1">1.1.99.1</ecNumber>
    </recommendedName>
    <alternativeName>
        <fullName evidence="1">Betaine aldehyde dehydrogenase</fullName>
        <shortName evidence="1">BADH</shortName>
        <ecNumber evidence="1">1.2.1.8</ecNumber>
    </alternativeName>
</protein>
<proteinExistence type="inferred from homology"/>
<sequence>MTTREYDYIICGAGSAGNVLATRLTEDPNVTVLLLEAGGPDYRFDFRTQMPAALAYPLQGRRYNWAYETDPEPHMDNRRMECGRGKGLGGSSLINGMCYIRGNALDYDNWSTHKGLENWTYLDCLPYFKKAETRDVGPNDYHGGNGPVSVTTSKPGANPLFEAMVDAGVQAGYPRTDDLNGYQQEGFGPMDRTVTPKGRRASTARGYLDQAKGRPNLEIVTHALADRILFDGKRASGVTYLRGSERASAHARREVLVCSGAIASPQLLQRSGVGPGAWLKELDIPIVLDLPGVGQNLQDHLEMYIQYECKEPVSLYPALKWWNQPKIGLEWMLNGTGLGASNHFEAGGFIRTRDDDPWPNIQYHFLPVAINYNGSNAIEMHGFQAHVGSMRSPSRGRVKLRSRDPNAHPSILFNYMAEALDWREFRDAIRATREIMRQPALDRYRGRELNPGADCKSDKELDTFVRARAETAFHPSCSCKMGYDDMAVVDEEGRVHGLEGLRVVDASIMPIITTGNLNAPTIMIAEKIADKIRGRQPLARVDVPYFVANGAMARNVAKAVRQPETV</sequence>